<organism>
    <name type="scientific">Thermus aquaticus</name>
    <dbReference type="NCBI Taxonomy" id="271"/>
    <lineage>
        <taxon>Bacteria</taxon>
        <taxon>Thermotogati</taxon>
        <taxon>Deinococcota</taxon>
        <taxon>Deinococci</taxon>
        <taxon>Thermales</taxon>
        <taxon>Thermaceae</taxon>
        <taxon>Thermus</taxon>
    </lineage>
</organism>
<evidence type="ECO:0000255" key="1">
    <source>
        <dbReference type="HAMAP-Rule" id="MF_01333"/>
    </source>
</evidence>
<evidence type="ECO:0000305" key="2"/>
<feature type="chain" id="PRO_0000125011" description="Large ribosomal subunit protein uL5">
    <location>
        <begin position="1"/>
        <end position="182"/>
    </location>
</feature>
<comment type="function">
    <text evidence="1">This is one of the proteins that bind and probably mediate the attachment of the 5S RNA into the large ribosomal subunit, where it forms part of the central protuberance. In the 70S ribosome it contacts protein S13 of the 30S subunit (bridge B1b), connecting the 2 subunits; this bridge is implicated in subunit movement. Contacts the P site tRNA; the 5S rRNA and some of its associated proteins might help stabilize positioning of ribosome-bound tRNAs.</text>
</comment>
<comment type="subunit">
    <text evidence="1">Part of the 50S ribosomal subunit; part of the 5S rRNA/L5/L18/L25 subcomplex. Contacts the 5S rRNA and the P site tRNA. Forms a bridge to the 30S subunit in the 70S ribosome.</text>
</comment>
<comment type="similarity">
    <text evidence="1">Belongs to the universal ribosomal protein uL5 family.</text>
</comment>
<proteinExistence type="inferred from homology"/>
<protein>
    <recommendedName>
        <fullName evidence="1">Large ribosomal subunit protein uL5</fullName>
    </recommendedName>
    <alternativeName>
        <fullName evidence="2">50S ribosomal protein L5</fullName>
    </alternativeName>
</protein>
<accession>P24315</accession>
<gene>
    <name evidence="1" type="primary">rplE</name>
    <name evidence="1" type="synonym">rpl5</name>
</gene>
<keyword id="KW-0687">Ribonucleoprotein</keyword>
<keyword id="KW-0689">Ribosomal protein</keyword>
<keyword id="KW-0694">RNA-binding</keyword>
<keyword id="KW-0699">rRNA-binding</keyword>
<keyword id="KW-0820">tRNA-binding</keyword>
<name>RL5_THEAQ</name>
<dbReference type="EMBL" id="X56552">
    <property type="protein sequence ID" value="CAA39896.1"/>
    <property type="molecule type" value="Genomic_DNA"/>
</dbReference>
<dbReference type="EMBL" id="S77828">
    <property type="protein sequence ID" value="AAB21094.1"/>
    <property type="molecule type" value="Genomic_DNA"/>
</dbReference>
<dbReference type="SMR" id="P24315"/>
<dbReference type="GO" id="GO:1990904">
    <property type="term" value="C:ribonucleoprotein complex"/>
    <property type="evidence" value="ECO:0007669"/>
    <property type="project" value="UniProtKB-KW"/>
</dbReference>
<dbReference type="GO" id="GO:0005840">
    <property type="term" value="C:ribosome"/>
    <property type="evidence" value="ECO:0007669"/>
    <property type="project" value="UniProtKB-KW"/>
</dbReference>
<dbReference type="GO" id="GO:0019843">
    <property type="term" value="F:rRNA binding"/>
    <property type="evidence" value="ECO:0007669"/>
    <property type="project" value="UniProtKB-UniRule"/>
</dbReference>
<dbReference type="GO" id="GO:0003735">
    <property type="term" value="F:structural constituent of ribosome"/>
    <property type="evidence" value="ECO:0007669"/>
    <property type="project" value="InterPro"/>
</dbReference>
<dbReference type="GO" id="GO:0000049">
    <property type="term" value="F:tRNA binding"/>
    <property type="evidence" value="ECO:0007669"/>
    <property type="project" value="UniProtKB-UniRule"/>
</dbReference>
<dbReference type="GO" id="GO:0006412">
    <property type="term" value="P:translation"/>
    <property type="evidence" value="ECO:0007669"/>
    <property type="project" value="UniProtKB-UniRule"/>
</dbReference>
<dbReference type="FunFam" id="3.30.1440.10:FF:000001">
    <property type="entry name" value="50S ribosomal protein L5"/>
    <property type="match status" value="1"/>
</dbReference>
<dbReference type="Gene3D" id="3.30.1440.10">
    <property type="match status" value="1"/>
</dbReference>
<dbReference type="HAMAP" id="MF_01333_B">
    <property type="entry name" value="Ribosomal_uL5_B"/>
    <property type="match status" value="1"/>
</dbReference>
<dbReference type="InterPro" id="IPR002132">
    <property type="entry name" value="Ribosomal_uL5"/>
</dbReference>
<dbReference type="InterPro" id="IPR020930">
    <property type="entry name" value="Ribosomal_uL5_bac-type"/>
</dbReference>
<dbReference type="InterPro" id="IPR031309">
    <property type="entry name" value="Ribosomal_uL5_C"/>
</dbReference>
<dbReference type="InterPro" id="IPR020929">
    <property type="entry name" value="Ribosomal_uL5_CS"/>
</dbReference>
<dbReference type="InterPro" id="IPR022803">
    <property type="entry name" value="Ribosomal_uL5_dom_sf"/>
</dbReference>
<dbReference type="InterPro" id="IPR031310">
    <property type="entry name" value="Ribosomal_uL5_N"/>
</dbReference>
<dbReference type="NCBIfam" id="NF000585">
    <property type="entry name" value="PRK00010.1"/>
    <property type="match status" value="1"/>
</dbReference>
<dbReference type="PANTHER" id="PTHR11994">
    <property type="entry name" value="60S RIBOSOMAL PROTEIN L11-RELATED"/>
    <property type="match status" value="1"/>
</dbReference>
<dbReference type="Pfam" id="PF00281">
    <property type="entry name" value="Ribosomal_L5"/>
    <property type="match status" value="1"/>
</dbReference>
<dbReference type="Pfam" id="PF00673">
    <property type="entry name" value="Ribosomal_L5_C"/>
    <property type="match status" value="1"/>
</dbReference>
<dbReference type="PIRSF" id="PIRSF002161">
    <property type="entry name" value="Ribosomal_L5"/>
    <property type="match status" value="1"/>
</dbReference>
<dbReference type="SUPFAM" id="SSF55282">
    <property type="entry name" value="RL5-like"/>
    <property type="match status" value="1"/>
</dbReference>
<dbReference type="PROSITE" id="PS00358">
    <property type="entry name" value="RIBOSOMAL_L5"/>
    <property type="match status" value="1"/>
</dbReference>
<reference key="1">
    <citation type="journal article" date="1991" name="Eur. J. Biochem.">
        <title>Analysis of the spc ribosomal protein operon of Thermus aquaticus.</title>
        <authorList>
            <person name="Jahn O."/>
            <person name="Hartmann R.K."/>
            <person name="Erdmann V.A."/>
        </authorList>
    </citation>
    <scope>NUCLEOTIDE SEQUENCE [GENOMIC DNA]</scope>
    <source>
        <strain>EP 00276</strain>
    </source>
</reference>
<reference key="2">
    <citation type="journal article" date="1991" name="Biochimie">
        <title>Comparative analysis of ribosomal protein L5 sequences from bacteria of the genus Thermus.</title>
        <authorList>
            <person name="Jahn O."/>
            <person name="Hartmann R.K."/>
            <person name="Boeckh T."/>
            <person name="Erdmann V.A."/>
        </authorList>
    </citation>
    <scope>NUCLEOTIDE SEQUENCE [GENOMIC DNA]</scope>
    <source>
        <strain>EP 00276</strain>
    </source>
</reference>
<sequence>MPLDVALKKKYYDEVRPELIRRFGYQNIWEVPRLEKVVINQGLGEAKEDARILEKASKELALIAGQKPAITRAKKSISNFKLRKGMPIGLRVTLRGDRMWIFLEKLLSVALPRIRDFRGLNPNSFDGRGNYNLGLKEQLIFPEITYDMVDVPRGMDIAVVTTAKTDEEAKALLELLGFPFRK</sequence>